<sequence length="184" mass="20353">MSDIINETKSRMQKSIESLSRELANISAGRANSNLLNGVTVDYYGAPTPVQQLASINVPEARLLVISPYDKTSVADIEKAIIAANLGVNPTSDGEVIRIAVPALTEERRKERVKDVKKIGEEAKVSVRNIRRDMNDQLKKDEKNGDITEDELRSGTEDVQKATDNSIKEIDQMIADKEKDIMSV</sequence>
<accession>A7X1N7</accession>
<evidence type="ECO:0000255" key="1">
    <source>
        <dbReference type="HAMAP-Rule" id="MF_00040"/>
    </source>
</evidence>
<evidence type="ECO:0000256" key="2">
    <source>
        <dbReference type="SAM" id="MobiDB-lite"/>
    </source>
</evidence>
<proteinExistence type="inferred from homology"/>
<gene>
    <name evidence="1" type="primary">frr</name>
    <name type="ordered locus">SAHV_1249</name>
</gene>
<reference key="1">
    <citation type="journal article" date="2008" name="Antimicrob. Agents Chemother.">
        <title>Mutated response regulator graR is responsible for phenotypic conversion of Staphylococcus aureus from heterogeneous vancomycin-intermediate resistance to vancomycin-intermediate resistance.</title>
        <authorList>
            <person name="Neoh H.-M."/>
            <person name="Cui L."/>
            <person name="Yuzawa H."/>
            <person name="Takeuchi F."/>
            <person name="Matsuo M."/>
            <person name="Hiramatsu K."/>
        </authorList>
    </citation>
    <scope>NUCLEOTIDE SEQUENCE [LARGE SCALE GENOMIC DNA]</scope>
    <source>
        <strain>Mu3 / ATCC 700698</strain>
    </source>
</reference>
<name>RRF_STAA1</name>
<organism>
    <name type="scientific">Staphylococcus aureus (strain Mu3 / ATCC 700698)</name>
    <dbReference type="NCBI Taxonomy" id="418127"/>
    <lineage>
        <taxon>Bacteria</taxon>
        <taxon>Bacillati</taxon>
        <taxon>Bacillota</taxon>
        <taxon>Bacilli</taxon>
        <taxon>Bacillales</taxon>
        <taxon>Staphylococcaceae</taxon>
        <taxon>Staphylococcus</taxon>
    </lineage>
</organism>
<protein>
    <recommendedName>
        <fullName evidence="1">Ribosome-recycling factor</fullName>
        <shortName evidence="1">RRF</shortName>
    </recommendedName>
    <alternativeName>
        <fullName evidence="1">Ribosome-releasing factor</fullName>
    </alternativeName>
</protein>
<keyword id="KW-0963">Cytoplasm</keyword>
<keyword id="KW-0648">Protein biosynthesis</keyword>
<feature type="chain" id="PRO_1000003275" description="Ribosome-recycling factor">
    <location>
        <begin position="1"/>
        <end position="184"/>
    </location>
</feature>
<feature type="region of interest" description="Disordered" evidence="2">
    <location>
        <begin position="134"/>
        <end position="167"/>
    </location>
</feature>
<comment type="function">
    <text evidence="1">Responsible for the release of ribosomes from messenger RNA at the termination of protein biosynthesis. May increase the efficiency of translation by recycling ribosomes from one round of translation to another.</text>
</comment>
<comment type="subcellular location">
    <subcellularLocation>
        <location evidence="1">Cytoplasm</location>
    </subcellularLocation>
</comment>
<comment type="similarity">
    <text evidence="1">Belongs to the RRF family.</text>
</comment>
<dbReference type="EMBL" id="AP009324">
    <property type="protein sequence ID" value="BAF78132.1"/>
    <property type="molecule type" value="Genomic_DNA"/>
</dbReference>
<dbReference type="RefSeq" id="WP_001280006.1">
    <property type="nucleotide sequence ID" value="NZ_CTYB01000004.1"/>
</dbReference>
<dbReference type="SMR" id="A7X1N7"/>
<dbReference type="KEGG" id="saw:SAHV_1249"/>
<dbReference type="HOGENOM" id="CLU_073981_2_0_9"/>
<dbReference type="GO" id="GO:0005737">
    <property type="term" value="C:cytoplasm"/>
    <property type="evidence" value="ECO:0007669"/>
    <property type="project" value="UniProtKB-SubCell"/>
</dbReference>
<dbReference type="GO" id="GO:0043023">
    <property type="term" value="F:ribosomal large subunit binding"/>
    <property type="evidence" value="ECO:0007669"/>
    <property type="project" value="TreeGrafter"/>
</dbReference>
<dbReference type="GO" id="GO:0006415">
    <property type="term" value="P:translational termination"/>
    <property type="evidence" value="ECO:0007669"/>
    <property type="project" value="UniProtKB-UniRule"/>
</dbReference>
<dbReference type="CDD" id="cd00520">
    <property type="entry name" value="RRF"/>
    <property type="match status" value="1"/>
</dbReference>
<dbReference type="FunFam" id="1.10.132.20:FF:000001">
    <property type="entry name" value="Ribosome-recycling factor"/>
    <property type="match status" value="1"/>
</dbReference>
<dbReference type="FunFam" id="3.30.1360.40:FF:000001">
    <property type="entry name" value="Ribosome-recycling factor"/>
    <property type="match status" value="1"/>
</dbReference>
<dbReference type="Gene3D" id="3.30.1360.40">
    <property type="match status" value="1"/>
</dbReference>
<dbReference type="Gene3D" id="1.10.132.20">
    <property type="entry name" value="Ribosome-recycling factor"/>
    <property type="match status" value="1"/>
</dbReference>
<dbReference type="HAMAP" id="MF_00040">
    <property type="entry name" value="RRF"/>
    <property type="match status" value="1"/>
</dbReference>
<dbReference type="InterPro" id="IPR002661">
    <property type="entry name" value="Ribosome_recyc_fac"/>
</dbReference>
<dbReference type="InterPro" id="IPR023584">
    <property type="entry name" value="Ribosome_recyc_fac_dom"/>
</dbReference>
<dbReference type="InterPro" id="IPR036191">
    <property type="entry name" value="RRF_sf"/>
</dbReference>
<dbReference type="NCBIfam" id="TIGR00496">
    <property type="entry name" value="frr"/>
    <property type="match status" value="1"/>
</dbReference>
<dbReference type="PANTHER" id="PTHR20982:SF3">
    <property type="entry name" value="MITOCHONDRIAL RIBOSOME RECYCLING FACTOR PSEUDO 1"/>
    <property type="match status" value="1"/>
</dbReference>
<dbReference type="PANTHER" id="PTHR20982">
    <property type="entry name" value="RIBOSOME RECYCLING FACTOR"/>
    <property type="match status" value="1"/>
</dbReference>
<dbReference type="Pfam" id="PF01765">
    <property type="entry name" value="RRF"/>
    <property type="match status" value="1"/>
</dbReference>
<dbReference type="SUPFAM" id="SSF55194">
    <property type="entry name" value="Ribosome recycling factor, RRF"/>
    <property type="match status" value="1"/>
</dbReference>